<gene>
    <name evidence="1" type="primary">fusA</name>
    <name type="ordered locus">XOO3588</name>
</gene>
<dbReference type="EMBL" id="AE013598">
    <property type="protein sequence ID" value="AAW76842.1"/>
    <property type="status" value="ALT_INIT"/>
    <property type="molecule type" value="Genomic_DNA"/>
</dbReference>
<dbReference type="SMR" id="Q5GWS9"/>
<dbReference type="STRING" id="291331.XOO3588"/>
<dbReference type="KEGG" id="xoo:XOO3588"/>
<dbReference type="HOGENOM" id="CLU_002794_4_1_6"/>
<dbReference type="Proteomes" id="UP000006735">
    <property type="component" value="Chromosome"/>
</dbReference>
<dbReference type="GO" id="GO:0005737">
    <property type="term" value="C:cytoplasm"/>
    <property type="evidence" value="ECO:0007669"/>
    <property type="project" value="UniProtKB-SubCell"/>
</dbReference>
<dbReference type="GO" id="GO:0005525">
    <property type="term" value="F:GTP binding"/>
    <property type="evidence" value="ECO:0007669"/>
    <property type="project" value="UniProtKB-UniRule"/>
</dbReference>
<dbReference type="GO" id="GO:0003924">
    <property type="term" value="F:GTPase activity"/>
    <property type="evidence" value="ECO:0007669"/>
    <property type="project" value="InterPro"/>
</dbReference>
<dbReference type="GO" id="GO:0097216">
    <property type="term" value="F:guanosine tetraphosphate binding"/>
    <property type="evidence" value="ECO:0007669"/>
    <property type="project" value="UniProtKB-ARBA"/>
</dbReference>
<dbReference type="GO" id="GO:0003746">
    <property type="term" value="F:translation elongation factor activity"/>
    <property type="evidence" value="ECO:0007669"/>
    <property type="project" value="UniProtKB-UniRule"/>
</dbReference>
<dbReference type="GO" id="GO:0032790">
    <property type="term" value="P:ribosome disassembly"/>
    <property type="evidence" value="ECO:0007669"/>
    <property type="project" value="TreeGrafter"/>
</dbReference>
<dbReference type="CDD" id="cd01886">
    <property type="entry name" value="EF-G"/>
    <property type="match status" value="1"/>
</dbReference>
<dbReference type="CDD" id="cd16262">
    <property type="entry name" value="EFG_III"/>
    <property type="match status" value="1"/>
</dbReference>
<dbReference type="CDD" id="cd01434">
    <property type="entry name" value="EFG_mtEFG1_IV"/>
    <property type="match status" value="1"/>
</dbReference>
<dbReference type="CDD" id="cd03713">
    <property type="entry name" value="EFG_mtEFG_C"/>
    <property type="match status" value="1"/>
</dbReference>
<dbReference type="CDD" id="cd04088">
    <property type="entry name" value="EFG_mtEFG_II"/>
    <property type="match status" value="1"/>
</dbReference>
<dbReference type="FunFam" id="2.40.30.10:FF:000006">
    <property type="entry name" value="Elongation factor G"/>
    <property type="match status" value="1"/>
</dbReference>
<dbReference type="FunFam" id="3.30.230.10:FF:000003">
    <property type="entry name" value="Elongation factor G"/>
    <property type="match status" value="1"/>
</dbReference>
<dbReference type="FunFam" id="3.30.70.240:FF:000001">
    <property type="entry name" value="Elongation factor G"/>
    <property type="match status" value="1"/>
</dbReference>
<dbReference type="FunFam" id="3.30.70.870:FF:000001">
    <property type="entry name" value="Elongation factor G"/>
    <property type="match status" value="1"/>
</dbReference>
<dbReference type="FunFam" id="3.40.50.300:FF:000029">
    <property type="entry name" value="Elongation factor G"/>
    <property type="match status" value="1"/>
</dbReference>
<dbReference type="Gene3D" id="3.30.230.10">
    <property type="match status" value="1"/>
</dbReference>
<dbReference type="Gene3D" id="3.30.70.240">
    <property type="match status" value="1"/>
</dbReference>
<dbReference type="Gene3D" id="3.30.70.870">
    <property type="entry name" value="Elongation Factor G (Translational Gtpase), domain 3"/>
    <property type="match status" value="1"/>
</dbReference>
<dbReference type="Gene3D" id="3.40.50.300">
    <property type="entry name" value="P-loop containing nucleotide triphosphate hydrolases"/>
    <property type="match status" value="1"/>
</dbReference>
<dbReference type="Gene3D" id="2.40.30.10">
    <property type="entry name" value="Translation factors"/>
    <property type="match status" value="1"/>
</dbReference>
<dbReference type="HAMAP" id="MF_00054_B">
    <property type="entry name" value="EF_G_EF_2_B"/>
    <property type="match status" value="1"/>
</dbReference>
<dbReference type="InterPro" id="IPR041095">
    <property type="entry name" value="EFG_II"/>
</dbReference>
<dbReference type="InterPro" id="IPR009022">
    <property type="entry name" value="EFG_III"/>
</dbReference>
<dbReference type="InterPro" id="IPR035647">
    <property type="entry name" value="EFG_III/V"/>
</dbReference>
<dbReference type="InterPro" id="IPR047872">
    <property type="entry name" value="EFG_IV"/>
</dbReference>
<dbReference type="InterPro" id="IPR035649">
    <property type="entry name" value="EFG_V"/>
</dbReference>
<dbReference type="InterPro" id="IPR000640">
    <property type="entry name" value="EFG_V-like"/>
</dbReference>
<dbReference type="InterPro" id="IPR004161">
    <property type="entry name" value="EFTu-like_2"/>
</dbReference>
<dbReference type="InterPro" id="IPR031157">
    <property type="entry name" value="G_TR_CS"/>
</dbReference>
<dbReference type="InterPro" id="IPR027417">
    <property type="entry name" value="P-loop_NTPase"/>
</dbReference>
<dbReference type="InterPro" id="IPR020568">
    <property type="entry name" value="Ribosomal_Su5_D2-typ_SF"/>
</dbReference>
<dbReference type="InterPro" id="IPR014721">
    <property type="entry name" value="Ribsml_uS5_D2-typ_fold_subgr"/>
</dbReference>
<dbReference type="InterPro" id="IPR005225">
    <property type="entry name" value="Small_GTP-bd"/>
</dbReference>
<dbReference type="InterPro" id="IPR000795">
    <property type="entry name" value="T_Tr_GTP-bd_dom"/>
</dbReference>
<dbReference type="InterPro" id="IPR009000">
    <property type="entry name" value="Transl_B-barrel_sf"/>
</dbReference>
<dbReference type="InterPro" id="IPR004540">
    <property type="entry name" value="Transl_elong_EFG/EF2"/>
</dbReference>
<dbReference type="InterPro" id="IPR005517">
    <property type="entry name" value="Transl_elong_EFG/EF2_IV"/>
</dbReference>
<dbReference type="NCBIfam" id="TIGR00484">
    <property type="entry name" value="EF-G"/>
    <property type="match status" value="1"/>
</dbReference>
<dbReference type="NCBIfam" id="NF009381">
    <property type="entry name" value="PRK12740.1-5"/>
    <property type="match status" value="1"/>
</dbReference>
<dbReference type="NCBIfam" id="TIGR00231">
    <property type="entry name" value="small_GTP"/>
    <property type="match status" value="1"/>
</dbReference>
<dbReference type="PANTHER" id="PTHR43261:SF1">
    <property type="entry name" value="RIBOSOME-RELEASING FACTOR 2, MITOCHONDRIAL"/>
    <property type="match status" value="1"/>
</dbReference>
<dbReference type="PANTHER" id="PTHR43261">
    <property type="entry name" value="TRANSLATION ELONGATION FACTOR G-RELATED"/>
    <property type="match status" value="1"/>
</dbReference>
<dbReference type="Pfam" id="PF00679">
    <property type="entry name" value="EFG_C"/>
    <property type="match status" value="1"/>
</dbReference>
<dbReference type="Pfam" id="PF14492">
    <property type="entry name" value="EFG_III"/>
    <property type="match status" value="1"/>
</dbReference>
<dbReference type="Pfam" id="PF03764">
    <property type="entry name" value="EFG_IV"/>
    <property type="match status" value="1"/>
</dbReference>
<dbReference type="Pfam" id="PF00009">
    <property type="entry name" value="GTP_EFTU"/>
    <property type="match status" value="1"/>
</dbReference>
<dbReference type="Pfam" id="PF03144">
    <property type="entry name" value="GTP_EFTU_D2"/>
    <property type="match status" value="1"/>
</dbReference>
<dbReference type="PRINTS" id="PR00315">
    <property type="entry name" value="ELONGATNFCT"/>
</dbReference>
<dbReference type="SMART" id="SM00838">
    <property type="entry name" value="EFG_C"/>
    <property type="match status" value="1"/>
</dbReference>
<dbReference type="SMART" id="SM00889">
    <property type="entry name" value="EFG_IV"/>
    <property type="match status" value="1"/>
</dbReference>
<dbReference type="SUPFAM" id="SSF54980">
    <property type="entry name" value="EF-G C-terminal domain-like"/>
    <property type="match status" value="2"/>
</dbReference>
<dbReference type="SUPFAM" id="SSF52540">
    <property type="entry name" value="P-loop containing nucleoside triphosphate hydrolases"/>
    <property type="match status" value="1"/>
</dbReference>
<dbReference type="SUPFAM" id="SSF54211">
    <property type="entry name" value="Ribosomal protein S5 domain 2-like"/>
    <property type="match status" value="1"/>
</dbReference>
<dbReference type="SUPFAM" id="SSF50447">
    <property type="entry name" value="Translation proteins"/>
    <property type="match status" value="1"/>
</dbReference>
<dbReference type="PROSITE" id="PS00301">
    <property type="entry name" value="G_TR_1"/>
    <property type="match status" value="1"/>
</dbReference>
<dbReference type="PROSITE" id="PS51722">
    <property type="entry name" value="G_TR_2"/>
    <property type="match status" value="1"/>
</dbReference>
<protein>
    <recommendedName>
        <fullName evidence="1">Elongation factor G</fullName>
        <shortName evidence="1">EF-G</shortName>
    </recommendedName>
</protein>
<feature type="chain" id="PRO_0000225252" description="Elongation factor G">
    <location>
        <begin position="1"/>
        <end position="705"/>
    </location>
</feature>
<feature type="domain" description="tr-type G">
    <location>
        <begin position="8"/>
        <end position="290"/>
    </location>
</feature>
<feature type="region of interest" description="Disordered" evidence="2">
    <location>
        <begin position="290"/>
        <end position="309"/>
    </location>
</feature>
<feature type="binding site" evidence="1">
    <location>
        <begin position="17"/>
        <end position="24"/>
    </location>
    <ligand>
        <name>GTP</name>
        <dbReference type="ChEBI" id="CHEBI:37565"/>
    </ligand>
</feature>
<feature type="binding site" evidence="1">
    <location>
        <begin position="88"/>
        <end position="92"/>
    </location>
    <ligand>
        <name>GTP</name>
        <dbReference type="ChEBI" id="CHEBI:37565"/>
    </ligand>
</feature>
<feature type="binding site" evidence="1">
    <location>
        <begin position="142"/>
        <end position="145"/>
    </location>
    <ligand>
        <name>GTP</name>
        <dbReference type="ChEBI" id="CHEBI:37565"/>
    </ligand>
</feature>
<reference key="1">
    <citation type="journal article" date="2005" name="Nucleic Acids Res.">
        <title>The genome sequence of Xanthomonas oryzae pathovar oryzae KACC10331, the bacterial blight pathogen of rice.</title>
        <authorList>
            <person name="Lee B.-M."/>
            <person name="Park Y.-J."/>
            <person name="Park D.-S."/>
            <person name="Kang H.-W."/>
            <person name="Kim J.-G."/>
            <person name="Song E.-S."/>
            <person name="Park I.-C."/>
            <person name="Yoon U.-H."/>
            <person name="Hahn J.-H."/>
            <person name="Koo B.-S."/>
            <person name="Lee G.-B."/>
            <person name="Kim H."/>
            <person name="Park H.-S."/>
            <person name="Yoon K.-O."/>
            <person name="Kim J.-H."/>
            <person name="Jung C.-H."/>
            <person name="Koh N.-H."/>
            <person name="Seo J.-S."/>
            <person name="Go S.-J."/>
        </authorList>
    </citation>
    <scope>NUCLEOTIDE SEQUENCE [LARGE SCALE GENOMIC DNA]</scope>
    <source>
        <strain>KACC10331 / KXO85</strain>
    </source>
</reference>
<comment type="function">
    <text evidence="1">Catalyzes the GTP-dependent ribosomal translocation step during translation elongation. During this step, the ribosome changes from the pre-translocational (PRE) to the post-translocational (POST) state as the newly formed A-site-bound peptidyl-tRNA and P-site-bound deacylated tRNA move to the P and E sites, respectively. Catalyzes the coordinated movement of the two tRNA molecules, the mRNA and conformational changes in the ribosome.</text>
</comment>
<comment type="subcellular location">
    <subcellularLocation>
        <location evidence="1">Cytoplasm</location>
    </subcellularLocation>
</comment>
<comment type="similarity">
    <text evidence="1">Belongs to the TRAFAC class translation factor GTPase superfamily. Classic translation factor GTPase family. EF-G/EF-2 subfamily.</text>
</comment>
<comment type="sequence caution" evidence="3">
    <conflict type="erroneous initiation">
        <sequence resource="EMBL-CDS" id="AAW76842"/>
    </conflict>
</comment>
<evidence type="ECO:0000255" key="1">
    <source>
        <dbReference type="HAMAP-Rule" id="MF_00054"/>
    </source>
</evidence>
<evidence type="ECO:0000256" key="2">
    <source>
        <dbReference type="SAM" id="MobiDB-lite"/>
    </source>
</evidence>
<evidence type="ECO:0000305" key="3"/>
<accession>Q5GWS9</accession>
<name>EFG_XANOR</name>
<sequence>MARTTPIERYRNFGIMAHIDAGKTTTSERILFYTGVSHKIGEVHDGAAVMDWMEQEQERGITITSAATTAFWSGMDKSMPQHRFNIIDTPGHVDFTIEVERSLRVLDGAVFVLCAVGGVQPQSETVWRQANKYSVPRMAFVNKMDRTGANFDKVVEQLKARLGAYAVPMQVPIGAEDGFEGVVDLLKMKAIHWDTASQGTTFEYSDIPAELVDVATDARSFMVEAAAEASEDLMDKYLNEGDLSEEEILKGLRERTLKVEIVPVFCGSAFKNKGVQAMLDGVVHLLPSPADRPPVQGIDEDEKEDTRAATDTAPFSALAFKIMTDPFVGSLTFFRVYSGTLNSGDQVYNPVKSKKERVGRILQMHSNNREEIKEVRAGDIAAAVGLKDVTTGDTLCAQDKIITLERMVFPEPVISMAVEPKTKSDQEKMGMALGRLAQEDPSFRVKTDEESGQTIISGMGELHLDIIVDRMRREFNVEANVGKPQVAYRETIRKSDVKSDYKHAKQSGGKGQYGHVVIELSPMTEEDRKSDNVKDDFLFINDITGGIIPKEFIPSVEKGLRETITSGPIAGFPVVGVKVKLVFGSYHDVDSSEMAFKLAASMAFKQGFAKASPVLLEPIMKVEIVSPEDYLGDVMGDVSRRRGVLQGQDDSPSGKIINAMIPLGEMFGYATSLRSMSQGRATFSMEFDHYEEAPANIADAVTKKG</sequence>
<proteinExistence type="inferred from homology"/>
<organism>
    <name type="scientific">Xanthomonas oryzae pv. oryzae (strain KACC10331 / KXO85)</name>
    <dbReference type="NCBI Taxonomy" id="291331"/>
    <lineage>
        <taxon>Bacteria</taxon>
        <taxon>Pseudomonadati</taxon>
        <taxon>Pseudomonadota</taxon>
        <taxon>Gammaproteobacteria</taxon>
        <taxon>Lysobacterales</taxon>
        <taxon>Lysobacteraceae</taxon>
        <taxon>Xanthomonas</taxon>
    </lineage>
</organism>
<keyword id="KW-0963">Cytoplasm</keyword>
<keyword id="KW-0251">Elongation factor</keyword>
<keyword id="KW-0342">GTP-binding</keyword>
<keyword id="KW-0547">Nucleotide-binding</keyword>
<keyword id="KW-0648">Protein biosynthesis</keyword>
<keyword id="KW-1185">Reference proteome</keyword>